<comment type="function">
    <text evidence="1">Catalyzes the thiamine diphosphate-dependent decarboxylation of 2-oxoglutarate and the subsequent addition of the resulting succinic semialdehyde-thiamine pyrophosphate anion to isochorismate to yield 2-succinyl-5-enolpyruvyl-6-hydroxy-3-cyclohexene-1-carboxylate (SEPHCHC).</text>
</comment>
<comment type="catalytic activity">
    <reaction evidence="1">
        <text>isochorismate + 2-oxoglutarate + H(+) = 5-enolpyruvoyl-6-hydroxy-2-succinyl-cyclohex-3-ene-1-carboxylate + CO2</text>
        <dbReference type="Rhea" id="RHEA:25593"/>
        <dbReference type="ChEBI" id="CHEBI:15378"/>
        <dbReference type="ChEBI" id="CHEBI:16526"/>
        <dbReference type="ChEBI" id="CHEBI:16810"/>
        <dbReference type="ChEBI" id="CHEBI:29780"/>
        <dbReference type="ChEBI" id="CHEBI:58818"/>
        <dbReference type="EC" id="2.2.1.9"/>
    </reaction>
</comment>
<comment type="cofactor">
    <cofactor evidence="1">
        <name>Mg(2+)</name>
        <dbReference type="ChEBI" id="CHEBI:18420"/>
    </cofactor>
    <cofactor evidence="1">
        <name>Mn(2+)</name>
        <dbReference type="ChEBI" id="CHEBI:29035"/>
    </cofactor>
</comment>
<comment type="cofactor">
    <cofactor evidence="1">
        <name>thiamine diphosphate</name>
        <dbReference type="ChEBI" id="CHEBI:58937"/>
    </cofactor>
    <text evidence="1">Binds 1 thiamine pyrophosphate per subunit.</text>
</comment>
<comment type="pathway">
    <text evidence="1">Quinol/quinone metabolism; 1,4-dihydroxy-2-naphthoate biosynthesis; 1,4-dihydroxy-2-naphthoate from chorismate: step 2/7.</text>
</comment>
<comment type="pathway">
    <text evidence="1">Quinol/quinone metabolism; menaquinone biosynthesis.</text>
</comment>
<comment type="subunit">
    <text evidence="1">Homodimer.</text>
</comment>
<comment type="similarity">
    <text evidence="1">Belongs to the TPP enzyme family. MenD subfamily.</text>
</comment>
<evidence type="ECO:0000255" key="1">
    <source>
        <dbReference type="HAMAP-Rule" id="MF_01659"/>
    </source>
</evidence>
<protein>
    <recommendedName>
        <fullName evidence="1">2-succinyl-5-enolpyruvyl-6-hydroxy-3-cyclohexene-1-carboxylate synthase</fullName>
        <shortName evidence="1">SEPHCHC synthase</shortName>
        <ecNumber evidence="1">2.2.1.9</ecNumber>
    </recommendedName>
    <alternativeName>
        <fullName evidence="1">Menaquinone biosynthesis protein MenD</fullName>
    </alternativeName>
</protein>
<gene>
    <name evidence="1" type="primary">menD</name>
    <name type="ordered locus">Caur_3655</name>
</gene>
<keyword id="KW-0460">Magnesium</keyword>
<keyword id="KW-0464">Manganese</keyword>
<keyword id="KW-0474">Menaquinone biosynthesis</keyword>
<keyword id="KW-0479">Metal-binding</keyword>
<keyword id="KW-1185">Reference proteome</keyword>
<keyword id="KW-0786">Thiamine pyrophosphate</keyword>
<keyword id="KW-0808">Transferase</keyword>
<name>MEND_CHLAA</name>
<proteinExistence type="inferred from homology"/>
<reference key="1">
    <citation type="journal article" date="2011" name="BMC Genomics">
        <title>Complete genome sequence of the filamentous anoxygenic phototrophic bacterium Chloroflexus aurantiacus.</title>
        <authorList>
            <person name="Tang K.H."/>
            <person name="Barry K."/>
            <person name="Chertkov O."/>
            <person name="Dalin E."/>
            <person name="Han C.S."/>
            <person name="Hauser L.J."/>
            <person name="Honchak B.M."/>
            <person name="Karbach L.E."/>
            <person name="Land M.L."/>
            <person name="Lapidus A."/>
            <person name="Larimer F.W."/>
            <person name="Mikhailova N."/>
            <person name="Pitluck S."/>
            <person name="Pierson B.K."/>
            <person name="Blankenship R.E."/>
        </authorList>
    </citation>
    <scope>NUCLEOTIDE SEQUENCE [LARGE SCALE GENOMIC DNA]</scope>
    <source>
        <strain>ATCC 29366 / DSM 635 / J-10-fl</strain>
    </source>
</reference>
<sequence>MNVTAHIEALTHWVAAIAQSLAANGVKDVVVCPGSRSTPLALAVARHPSLRVWMHLDERSAGFFALGMARARGMPAAVLCTSGTAVANLLPAVVEANLARVPLVILTADRPPELRDNGAPQTIDQIGIFGRNVRWFVDLPTPDMALLPFLRATLGRAVGLARSAPAGPVHLNLPFREPLVPDRARMAALFSETPSAVQVTPARRMIGGAELAMLATSLVEYRRGLIIAGPDCPPDLGPLLTTLAHRLRYPILADPLSGVRYGPHVDEYTLGTYDAFLRDERFVSSYAPEVVLRFGAMPTSKPLLLYLQHHPHARQIVIDGGAGWREPTSLAREHLHVDEHWFCIALADALASSQREGPTLWLRAWVSAEQTARTIIQSHLLPQEHISEPGLFARLGSWLPAGATLFVGNSMPVRDCDTFLGPRTNPLYVVGNRGANGIDGLVSTALGLAAGQARPLVMALGDLSLLHDSNGLLAARLHRLDATILLINNDGGGIFSFLPQASETDQFELLFGTPHGVDFAPLAAMHNAHYTLATDWSAVHEALQASFTGGLHLIEVRTRRDQNVIDHRTIWPLVSNALAQAGITVAE</sequence>
<organism>
    <name type="scientific">Chloroflexus aurantiacus (strain ATCC 29366 / DSM 635 / J-10-fl)</name>
    <dbReference type="NCBI Taxonomy" id="324602"/>
    <lineage>
        <taxon>Bacteria</taxon>
        <taxon>Bacillati</taxon>
        <taxon>Chloroflexota</taxon>
        <taxon>Chloroflexia</taxon>
        <taxon>Chloroflexales</taxon>
        <taxon>Chloroflexineae</taxon>
        <taxon>Chloroflexaceae</taxon>
        <taxon>Chloroflexus</taxon>
    </lineage>
</organism>
<dbReference type="EC" id="2.2.1.9" evidence="1"/>
<dbReference type="EMBL" id="CP000909">
    <property type="protein sequence ID" value="ABY36838.1"/>
    <property type="molecule type" value="Genomic_DNA"/>
</dbReference>
<dbReference type="RefSeq" id="WP_012259491.1">
    <property type="nucleotide sequence ID" value="NC_010175.1"/>
</dbReference>
<dbReference type="RefSeq" id="YP_001637227.1">
    <property type="nucleotide sequence ID" value="NC_010175.1"/>
</dbReference>
<dbReference type="SMR" id="A9WB45"/>
<dbReference type="FunCoup" id="A9WB45">
    <property type="interactions" value="123"/>
</dbReference>
<dbReference type="STRING" id="324602.Caur_3655"/>
<dbReference type="EnsemblBacteria" id="ABY36838">
    <property type="protein sequence ID" value="ABY36838"/>
    <property type="gene ID" value="Caur_3655"/>
</dbReference>
<dbReference type="KEGG" id="cau:Caur_3655"/>
<dbReference type="PATRIC" id="fig|324602.8.peg.4109"/>
<dbReference type="eggNOG" id="COG1165">
    <property type="taxonomic scope" value="Bacteria"/>
</dbReference>
<dbReference type="HOGENOM" id="CLU_006051_3_0_0"/>
<dbReference type="InParanoid" id="A9WB45"/>
<dbReference type="UniPathway" id="UPA00079"/>
<dbReference type="UniPathway" id="UPA01057">
    <property type="reaction ID" value="UER00164"/>
</dbReference>
<dbReference type="Proteomes" id="UP000002008">
    <property type="component" value="Chromosome"/>
</dbReference>
<dbReference type="GO" id="GO:0070204">
    <property type="term" value="F:2-succinyl-5-enolpyruvyl-6-hydroxy-3-cyclohexene-1-carboxylic-acid synthase activity"/>
    <property type="evidence" value="ECO:0007669"/>
    <property type="project" value="UniProtKB-UniRule"/>
</dbReference>
<dbReference type="GO" id="GO:0000287">
    <property type="term" value="F:magnesium ion binding"/>
    <property type="evidence" value="ECO:0007669"/>
    <property type="project" value="UniProtKB-UniRule"/>
</dbReference>
<dbReference type="GO" id="GO:0030145">
    <property type="term" value="F:manganese ion binding"/>
    <property type="evidence" value="ECO:0007669"/>
    <property type="project" value="UniProtKB-UniRule"/>
</dbReference>
<dbReference type="GO" id="GO:0030976">
    <property type="term" value="F:thiamine pyrophosphate binding"/>
    <property type="evidence" value="ECO:0007669"/>
    <property type="project" value="UniProtKB-UniRule"/>
</dbReference>
<dbReference type="GO" id="GO:0009234">
    <property type="term" value="P:menaquinone biosynthetic process"/>
    <property type="evidence" value="ECO:0007669"/>
    <property type="project" value="UniProtKB-UniRule"/>
</dbReference>
<dbReference type="CDD" id="cd07037">
    <property type="entry name" value="TPP_PYR_MenD"/>
    <property type="match status" value="1"/>
</dbReference>
<dbReference type="CDD" id="cd02009">
    <property type="entry name" value="TPP_SHCHC_synthase"/>
    <property type="match status" value="1"/>
</dbReference>
<dbReference type="Gene3D" id="3.40.50.970">
    <property type="match status" value="2"/>
</dbReference>
<dbReference type="Gene3D" id="3.40.50.1220">
    <property type="entry name" value="TPP-binding domain"/>
    <property type="match status" value="1"/>
</dbReference>
<dbReference type="HAMAP" id="MF_01659">
    <property type="entry name" value="MenD"/>
    <property type="match status" value="1"/>
</dbReference>
<dbReference type="InterPro" id="IPR029035">
    <property type="entry name" value="DHS-like_NAD/FAD-binding_dom"/>
</dbReference>
<dbReference type="InterPro" id="IPR004433">
    <property type="entry name" value="MenaQ_synth_MenD"/>
</dbReference>
<dbReference type="InterPro" id="IPR032264">
    <property type="entry name" value="MenD_middle"/>
</dbReference>
<dbReference type="InterPro" id="IPR029061">
    <property type="entry name" value="THDP-binding"/>
</dbReference>
<dbReference type="InterPro" id="IPR012001">
    <property type="entry name" value="Thiamin_PyroP_enz_TPP-bd_dom"/>
</dbReference>
<dbReference type="InterPro" id="IPR011766">
    <property type="entry name" value="TPP_enzyme_TPP-bd"/>
</dbReference>
<dbReference type="NCBIfam" id="TIGR00173">
    <property type="entry name" value="menD"/>
    <property type="match status" value="1"/>
</dbReference>
<dbReference type="PANTHER" id="PTHR42916">
    <property type="entry name" value="2-SUCCINYL-5-ENOLPYRUVYL-6-HYDROXY-3-CYCLOHEXENE-1-CARBOXYLATE SYNTHASE"/>
    <property type="match status" value="1"/>
</dbReference>
<dbReference type="PANTHER" id="PTHR42916:SF1">
    <property type="entry name" value="PROTEIN PHYLLO, CHLOROPLASTIC"/>
    <property type="match status" value="1"/>
</dbReference>
<dbReference type="Pfam" id="PF02775">
    <property type="entry name" value="TPP_enzyme_C"/>
    <property type="match status" value="1"/>
</dbReference>
<dbReference type="Pfam" id="PF16582">
    <property type="entry name" value="TPP_enzyme_M_2"/>
    <property type="match status" value="1"/>
</dbReference>
<dbReference type="Pfam" id="PF02776">
    <property type="entry name" value="TPP_enzyme_N"/>
    <property type="match status" value="1"/>
</dbReference>
<dbReference type="PIRSF" id="PIRSF004983">
    <property type="entry name" value="MenD"/>
    <property type="match status" value="1"/>
</dbReference>
<dbReference type="SUPFAM" id="SSF52467">
    <property type="entry name" value="DHS-like NAD/FAD-binding domain"/>
    <property type="match status" value="1"/>
</dbReference>
<dbReference type="SUPFAM" id="SSF52518">
    <property type="entry name" value="Thiamin diphosphate-binding fold (THDP-binding)"/>
    <property type="match status" value="2"/>
</dbReference>
<feature type="chain" id="PRO_0000341722" description="2-succinyl-5-enolpyruvyl-6-hydroxy-3-cyclohexene-1-carboxylate synthase">
    <location>
        <begin position="1"/>
        <end position="587"/>
    </location>
</feature>
<accession>A9WB45</accession>